<dbReference type="EMBL" id="AC008261">
    <property type="protein sequence ID" value="AAF26152.1"/>
    <property type="molecule type" value="Genomic_DNA"/>
</dbReference>
<dbReference type="EMBL" id="CP002686">
    <property type="protein sequence ID" value="AEE73626.1"/>
    <property type="molecule type" value="Genomic_DNA"/>
</dbReference>
<dbReference type="EMBL" id="AK228890">
    <property type="protein sequence ID" value="BAF00780.1"/>
    <property type="molecule type" value="mRNA"/>
</dbReference>
<dbReference type="EMBL" id="BT029221">
    <property type="protein sequence ID" value="ABJ98553.1"/>
    <property type="molecule type" value="mRNA"/>
</dbReference>
<dbReference type="EMBL" id="AY087631">
    <property type="protein sequence ID" value="AAM65170.1"/>
    <property type="status" value="ALT_INIT"/>
    <property type="molecule type" value="mRNA"/>
</dbReference>
<dbReference type="SMR" id="Q8LAT0"/>
<dbReference type="BioGRID" id="6565">
    <property type="interactions" value="49"/>
</dbReference>
<dbReference type="IntAct" id="Q8LAT0">
    <property type="interactions" value="49"/>
</dbReference>
<dbReference type="STRING" id="3702.Q8LAT0"/>
<dbReference type="PaxDb" id="3702-AT3G01220.1"/>
<dbReference type="ProteomicsDB" id="246532"/>
<dbReference type="EnsemblPlants" id="AT3G01220.1">
    <property type="protein sequence ID" value="AT3G01220.1"/>
    <property type="gene ID" value="AT3G01220"/>
</dbReference>
<dbReference type="GeneID" id="821232"/>
<dbReference type="Gramene" id="AT3G01220.1">
    <property type="protein sequence ID" value="AT3G01220.1"/>
    <property type="gene ID" value="AT3G01220"/>
</dbReference>
<dbReference type="KEGG" id="ath:AT3G01220"/>
<dbReference type="Araport" id="AT3G01220"/>
<dbReference type="TAIR" id="AT3G01220">
    <property type="gene designation" value="HB20"/>
</dbReference>
<dbReference type="eggNOG" id="KOG0483">
    <property type="taxonomic scope" value="Eukaryota"/>
</dbReference>
<dbReference type="HOGENOM" id="CLU_060842_4_0_1"/>
<dbReference type="InParanoid" id="Q8LAT0"/>
<dbReference type="OMA" id="NLEMPRE"/>
<dbReference type="PhylomeDB" id="Q8LAT0"/>
<dbReference type="PRO" id="PR:Q8LAT0"/>
<dbReference type="Proteomes" id="UP000006548">
    <property type="component" value="Chromosome 3"/>
</dbReference>
<dbReference type="ExpressionAtlas" id="Q8LAT0">
    <property type="expression patterns" value="baseline and differential"/>
</dbReference>
<dbReference type="GO" id="GO:0005634">
    <property type="term" value="C:nucleus"/>
    <property type="evidence" value="ECO:0007669"/>
    <property type="project" value="UniProtKB-SubCell"/>
</dbReference>
<dbReference type="GO" id="GO:0003700">
    <property type="term" value="F:DNA-binding transcription factor activity"/>
    <property type="evidence" value="ECO:0000250"/>
    <property type="project" value="TAIR"/>
</dbReference>
<dbReference type="GO" id="GO:0000981">
    <property type="term" value="F:DNA-binding transcription factor activity, RNA polymerase II-specific"/>
    <property type="evidence" value="ECO:0007669"/>
    <property type="project" value="InterPro"/>
</dbReference>
<dbReference type="GO" id="GO:0043565">
    <property type="term" value="F:sequence-specific DNA binding"/>
    <property type="evidence" value="ECO:0007669"/>
    <property type="project" value="InterPro"/>
</dbReference>
<dbReference type="GO" id="GO:0009733">
    <property type="term" value="P:response to auxin"/>
    <property type="evidence" value="ECO:0000270"/>
    <property type="project" value="TAIR"/>
</dbReference>
<dbReference type="CDD" id="cd00086">
    <property type="entry name" value="homeodomain"/>
    <property type="match status" value="1"/>
</dbReference>
<dbReference type="FunFam" id="1.10.10.60:FF:000200">
    <property type="entry name" value="Homeobox-leucine zipper protein ATHB-13"/>
    <property type="match status" value="1"/>
</dbReference>
<dbReference type="Gene3D" id="1.10.10.60">
    <property type="entry name" value="Homeodomain-like"/>
    <property type="match status" value="1"/>
</dbReference>
<dbReference type="InterPro" id="IPR001356">
    <property type="entry name" value="HD"/>
</dbReference>
<dbReference type="InterPro" id="IPR045224">
    <property type="entry name" value="HDZip_class_I_plant"/>
</dbReference>
<dbReference type="InterPro" id="IPR017970">
    <property type="entry name" value="Homeobox_CS"/>
</dbReference>
<dbReference type="InterPro" id="IPR009057">
    <property type="entry name" value="Homeodomain-like_sf"/>
</dbReference>
<dbReference type="InterPro" id="IPR000047">
    <property type="entry name" value="HTH_motif"/>
</dbReference>
<dbReference type="InterPro" id="IPR003106">
    <property type="entry name" value="Leu_zip_homeo"/>
</dbReference>
<dbReference type="PANTHER" id="PTHR24326">
    <property type="entry name" value="HOMEOBOX-LEUCINE ZIPPER PROTEIN"/>
    <property type="match status" value="1"/>
</dbReference>
<dbReference type="PANTHER" id="PTHR24326:SF563">
    <property type="entry name" value="HOMEOBOX-LEUCINE ZIPPER PROTEIN ATHB-20"/>
    <property type="match status" value="1"/>
</dbReference>
<dbReference type="Pfam" id="PF02183">
    <property type="entry name" value="HALZ"/>
    <property type="match status" value="1"/>
</dbReference>
<dbReference type="Pfam" id="PF00046">
    <property type="entry name" value="Homeodomain"/>
    <property type="match status" value="1"/>
</dbReference>
<dbReference type="PRINTS" id="PR00031">
    <property type="entry name" value="HTHREPRESSR"/>
</dbReference>
<dbReference type="SMART" id="SM00389">
    <property type="entry name" value="HOX"/>
    <property type="match status" value="1"/>
</dbReference>
<dbReference type="SUPFAM" id="SSF46689">
    <property type="entry name" value="Homeodomain-like"/>
    <property type="match status" value="1"/>
</dbReference>
<dbReference type="PROSITE" id="PS00027">
    <property type="entry name" value="HOMEOBOX_1"/>
    <property type="match status" value="1"/>
</dbReference>
<dbReference type="PROSITE" id="PS50071">
    <property type="entry name" value="HOMEOBOX_2"/>
    <property type="match status" value="1"/>
</dbReference>
<gene>
    <name type="primary">ATHB-20</name>
    <name type="ordered locus">At3g01220</name>
    <name type="ORF">T4P13.9</name>
</gene>
<protein>
    <recommendedName>
        <fullName>Homeobox-leucine zipper protein ATHB-20</fullName>
    </recommendedName>
    <alternativeName>
        <fullName>HD-ZIP protein ATHB-20</fullName>
    </alternativeName>
    <alternativeName>
        <fullName>Homeodomain transcription factor ATHB-20</fullName>
    </alternativeName>
</protein>
<evidence type="ECO:0000250" key="1"/>
<evidence type="ECO:0000255" key="2">
    <source>
        <dbReference type="PROSITE-ProRule" id="PRU00108"/>
    </source>
</evidence>
<evidence type="ECO:0000269" key="3">
    <source>
    </source>
</evidence>
<evidence type="ECO:0000269" key="4">
    <source>
    </source>
</evidence>
<evidence type="ECO:0000305" key="5"/>
<organism>
    <name type="scientific">Arabidopsis thaliana</name>
    <name type="common">Mouse-ear cress</name>
    <dbReference type="NCBI Taxonomy" id="3702"/>
    <lineage>
        <taxon>Eukaryota</taxon>
        <taxon>Viridiplantae</taxon>
        <taxon>Streptophyta</taxon>
        <taxon>Embryophyta</taxon>
        <taxon>Tracheophyta</taxon>
        <taxon>Spermatophyta</taxon>
        <taxon>Magnoliopsida</taxon>
        <taxon>eudicotyledons</taxon>
        <taxon>Gunneridae</taxon>
        <taxon>Pentapetalae</taxon>
        <taxon>rosids</taxon>
        <taxon>malvids</taxon>
        <taxon>Brassicales</taxon>
        <taxon>Brassicaceae</taxon>
        <taxon>Camelineae</taxon>
        <taxon>Arabidopsis</taxon>
    </lineage>
</organism>
<comment type="function">
    <text evidence="1">Probable transcription factor.</text>
</comment>
<comment type="interaction">
    <interactant intactId="EBI-4465764">
        <id>Q8LAT0</id>
    </interactant>
    <interactant intactId="EBI-4459822">
        <id>Q9SIT9</id>
        <label>NFYB7</label>
    </interactant>
    <organismsDiffer>false</organismsDiffer>
    <experiments>3</experiments>
</comment>
<comment type="subcellular location">
    <subcellularLocation>
        <location evidence="5">Nucleus</location>
    </subcellularLocation>
</comment>
<comment type="tissue specificity">
    <text evidence="4">Widely expressed.</text>
</comment>
<comment type="developmental stage">
    <text evidence="3">Expressed 3 day after germination (DAG) in first rosette leaf primordia around the veins in the apical part of the leaf and close to the midvein in the basal part of the leaf. At later stage, expressed in new forming veins, and veins and fascicular cambium of mature leaves.</text>
</comment>
<comment type="induction">
    <text evidence="3">By auxin.</text>
</comment>
<comment type="similarity">
    <text evidence="5">Belongs to the HD-ZIP homeobox family. Class I subfamily.</text>
</comment>
<comment type="sequence caution" evidence="5">
    <conflict type="erroneous initiation">
        <sequence resource="EMBL-CDS" id="AAM65170"/>
    </conflict>
</comment>
<sequence length="286" mass="33076">MYVFDPTTEAGLRLEMAFPQHGFMFQQLHEDNSQDQLPSCPPHLFNGGGNYMMNRSMSLMNVQEDHNQTLDEENLSDDGAHTMLGEKKKRLQLEQVKALEKSFELGNKLEPERKIQLAKALGMQPRQIAIWFQNRRARWKTRQLERDYDSLKKQFESLKSDNASLLAYNKKLLAEVMALKNKECNEGNIVKREAEASWSNNGSTENSSDINLEMPRETITTHVNTIKDLFPSSIRSSAHDDDHHQNHEIVQEESLCNMFNGIDETTPAGYWAWSDPNHNHHHHQFN</sequence>
<reference key="1">
    <citation type="journal article" date="2000" name="Nature">
        <title>Sequence and analysis of chromosome 3 of the plant Arabidopsis thaliana.</title>
        <authorList>
            <person name="Salanoubat M."/>
            <person name="Lemcke K."/>
            <person name="Rieger M."/>
            <person name="Ansorge W."/>
            <person name="Unseld M."/>
            <person name="Fartmann B."/>
            <person name="Valle G."/>
            <person name="Bloecker H."/>
            <person name="Perez-Alonso M."/>
            <person name="Obermaier B."/>
            <person name="Delseny M."/>
            <person name="Boutry M."/>
            <person name="Grivell L.A."/>
            <person name="Mache R."/>
            <person name="Puigdomenech P."/>
            <person name="De Simone V."/>
            <person name="Choisne N."/>
            <person name="Artiguenave F."/>
            <person name="Robert C."/>
            <person name="Brottier P."/>
            <person name="Wincker P."/>
            <person name="Cattolico L."/>
            <person name="Weissenbach J."/>
            <person name="Saurin W."/>
            <person name="Quetier F."/>
            <person name="Schaefer M."/>
            <person name="Mueller-Auer S."/>
            <person name="Gabel C."/>
            <person name="Fuchs M."/>
            <person name="Benes V."/>
            <person name="Wurmbach E."/>
            <person name="Drzonek H."/>
            <person name="Erfle H."/>
            <person name="Jordan N."/>
            <person name="Bangert S."/>
            <person name="Wiedelmann R."/>
            <person name="Kranz H."/>
            <person name="Voss H."/>
            <person name="Holland R."/>
            <person name="Brandt P."/>
            <person name="Nyakatura G."/>
            <person name="Vezzi A."/>
            <person name="D'Angelo M."/>
            <person name="Pallavicini A."/>
            <person name="Toppo S."/>
            <person name="Simionati B."/>
            <person name="Conrad A."/>
            <person name="Hornischer K."/>
            <person name="Kauer G."/>
            <person name="Loehnert T.-H."/>
            <person name="Nordsiek G."/>
            <person name="Reichelt J."/>
            <person name="Scharfe M."/>
            <person name="Schoen O."/>
            <person name="Bargues M."/>
            <person name="Terol J."/>
            <person name="Climent J."/>
            <person name="Navarro P."/>
            <person name="Collado C."/>
            <person name="Perez-Perez A."/>
            <person name="Ottenwaelder B."/>
            <person name="Duchemin D."/>
            <person name="Cooke R."/>
            <person name="Laudie M."/>
            <person name="Berger-Llauro C."/>
            <person name="Purnelle B."/>
            <person name="Masuy D."/>
            <person name="de Haan M."/>
            <person name="Maarse A.C."/>
            <person name="Alcaraz J.-P."/>
            <person name="Cottet A."/>
            <person name="Casacuberta E."/>
            <person name="Monfort A."/>
            <person name="Argiriou A."/>
            <person name="Flores M."/>
            <person name="Liguori R."/>
            <person name="Vitale D."/>
            <person name="Mannhaupt G."/>
            <person name="Haase D."/>
            <person name="Schoof H."/>
            <person name="Rudd S."/>
            <person name="Zaccaria P."/>
            <person name="Mewes H.-W."/>
            <person name="Mayer K.F.X."/>
            <person name="Kaul S."/>
            <person name="Town C.D."/>
            <person name="Koo H.L."/>
            <person name="Tallon L.J."/>
            <person name="Jenkins J."/>
            <person name="Rooney T."/>
            <person name="Rizzo M."/>
            <person name="Walts A."/>
            <person name="Utterback T."/>
            <person name="Fujii C.Y."/>
            <person name="Shea T.P."/>
            <person name="Creasy T.H."/>
            <person name="Haas B."/>
            <person name="Maiti R."/>
            <person name="Wu D."/>
            <person name="Peterson J."/>
            <person name="Van Aken S."/>
            <person name="Pai G."/>
            <person name="Militscher J."/>
            <person name="Sellers P."/>
            <person name="Gill J.E."/>
            <person name="Feldblyum T.V."/>
            <person name="Preuss D."/>
            <person name="Lin X."/>
            <person name="Nierman W.C."/>
            <person name="Salzberg S.L."/>
            <person name="White O."/>
            <person name="Venter J.C."/>
            <person name="Fraser C.M."/>
            <person name="Kaneko T."/>
            <person name="Nakamura Y."/>
            <person name="Sato S."/>
            <person name="Kato T."/>
            <person name="Asamizu E."/>
            <person name="Sasamoto S."/>
            <person name="Kimura T."/>
            <person name="Idesawa K."/>
            <person name="Kawashima K."/>
            <person name="Kishida Y."/>
            <person name="Kiyokawa C."/>
            <person name="Kohara M."/>
            <person name="Matsumoto M."/>
            <person name="Matsuno A."/>
            <person name="Muraki A."/>
            <person name="Nakayama S."/>
            <person name="Nakazaki N."/>
            <person name="Shinpo S."/>
            <person name="Takeuchi C."/>
            <person name="Wada T."/>
            <person name="Watanabe A."/>
            <person name="Yamada M."/>
            <person name="Yasuda M."/>
            <person name="Tabata S."/>
        </authorList>
    </citation>
    <scope>NUCLEOTIDE SEQUENCE [LARGE SCALE GENOMIC DNA]</scope>
    <source>
        <strain>cv. Columbia</strain>
    </source>
</reference>
<reference key="2">
    <citation type="journal article" date="2017" name="Plant J.">
        <title>Araport11: a complete reannotation of the Arabidopsis thaliana reference genome.</title>
        <authorList>
            <person name="Cheng C.Y."/>
            <person name="Krishnakumar V."/>
            <person name="Chan A.P."/>
            <person name="Thibaud-Nissen F."/>
            <person name="Schobel S."/>
            <person name="Town C.D."/>
        </authorList>
    </citation>
    <scope>GENOME REANNOTATION</scope>
    <source>
        <strain>cv. Columbia</strain>
    </source>
</reference>
<reference key="3">
    <citation type="submission" date="2006-07" db="EMBL/GenBank/DDBJ databases">
        <title>Large-scale analysis of RIKEN Arabidopsis full-length (RAFL) cDNAs.</title>
        <authorList>
            <person name="Totoki Y."/>
            <person name="Seki M."/>
            <person name="Ishida J."/>
            <person name="Nakajima M."/>
            <person name="Enju A."/>
            <person name="Kamiya A."/>
            <person name="Narusaka M."/>
            <person name="Shin-i T."/>
            <person name="Nakagawa M."/>
            <person name="Sakamoto N."/>
            <person name="Oishi K."/>
            <person name="Kohara Y."/>
            <person name="Kobayashi M."/>
            <person name="Toyoda A."/>
            <person name="Sakaki Y."/>
            <person name="Sakurai T."/>
            <person name="Iida K."/>
            <person name="Akiyama K."/>
            <person name="Satou M."/>
            <person name="Toyoda T."/>
            <person name="Konagaya A."/>
            <person name="Carninci P."/>
            <person name="Kawai J."/>
            <person name="Hayashizaki Y."/>
            <person name="Shinozaki K."/>
        </authorList>
    </citation>
    <scope>NUCLEOTIDE SEQUENCE [LARGE SCALE MRNA]</scope>
    <source>
        <strain>cv. Columbia</strain>
    </source>
</reference>
<reference key="4">
    <citation type="submission" date="2006-10" db="EMBL/GenBank/DDBJ databases">
        <title>Arabidopsis ORF clones.</title>
        <authorList>
            <person name="Quinitio C."/>
            <person name="Chen H."/>
            <person name="Kim C.J."/>
            <person name="Shinn P."/>
            <person name="Ecker J.R."/>
        </authorList>
    </citation>
    <scope>NUCLEOTIDE SEQUENCE [LARGE SCALE MRNA]</scope>
    <source>
        <strain>cv. Columbia</strain>
    </source>
</reference>
<reference key="5">
    <citation type="submission" date="2002-03" db="EMBL/GenBank/DDBJ databases">
        <title>Full-length cDNA from Arabidopsis thaliana.</title>
        <authorList>
            <person name="Brover V.V."/>
            <person name="Troukhan M.E."/>
            <person name="Alexandrov N.A."/>
            <person name="Lu Y.-P."/>
            <person name="Flavell R.B."/>
            <person name="Feldmann K.A."/>
        </authorList>
    </citation>
    <scope>NUCLEOTIDE SEQUENCE [LARGE SCALE MRNA]</scope>
</reference>
<reference key="6">
    <citation type="journal article" date="2003" name="Plant Physiol.">
        <title>Auxin signaling in Arabidopsis leaf vascular development.</title>
        <authorList>
            <person name="Mattsson J."/>
            <person name="Ckurshumova W."/>
            <person name="Berleth T."/>
        </authorList>
    </citation>
    <scope>DEVELOPMENTAL STAGE</scope>
    <scope>INDUCTION</scope>
</reference>
<reference key="7">
    <citation type="journal article" date="2005" name="Plant Physiol.">
        <title>Homeodomain leucine zipper class I genes in Arabidopsis. Expression patterns and phylogenetic relationships.</title>
        <authorList>
            <person name="Henriksson E."/>
            <person name="Olsson A.S.B."/>
            <person name="Johannesson H."/>
            <person name="Johansson H."/>
            <person name="Hanson J."/>
            <person name="Engstroem P."/>
            <person name="Soederman E."/>
        </authorList>
    </citation>
    <scope>GENE FAMILY</scope>
    <scope>TISSUE SPECIFICITY</scope>
</reference>
<accession>Q8LAT0</accession>
<accession>Q058J7</accession>
<accession>Q9MAD1</accession>
<name>ATB20_ARATH</name>
<proteinExistence type="evidence at protein level"/>
<feature type="chain" id="PRO_0000257797" description="Homeobox-leucine zipper protein ATHB-20">
    <location>
        <begin position="1"/>
        <end position="286"/>
    </location>
</feature>
<feature type="DNA-binding region" description="Homeobox" evidence="2">
    <location>
        <begin position="84"/>
        <end position="143"/>
    </location>
</feature>
<feature type="region of interest" description="Leucine-zipper">
    <location>
        <begin position="144"/>
        <end position="179"/>
    </location>
</feature>
<keyword id="KW-0238">DNA-binding</keyword>
<keyword id="KW-0371">Homeobox</keyword>
<keyword id="KW-0539">Nucleus</keyword>
<keyword id="KW-1185">Reference proteome</keyword>
<keyword id="KW-0804">Transcription</keyword>
<keyword id="KW-0805">Transcription regulation</keyword>